<comment type="function">
    <text evidence="1">NDH-1 shuttles electrons from NADH, via FMN and iron-sulfur (Fe-S) centers, to quinones in the respiratory chain. The immediate electron acceptor for the enzyme in this species is believed to be a menaquinone. Couples the redox reaction to proton translocation (for every two electrons transferred, four hydrogen ions are translocated across the cytoplasmic membrane), and thus conserves the redox energy in a proton gradient.</text>
</comment>
<comment type="catalytic activity">
    <reaction evidence="1">
        <text>a quinone + NADH + 5 H(+)(in) = a quinol + NAD(+) + 4 H(+)(out)</text>
        <dbReference type="Rhea" id="RHEA:57888"/>
        <dbReference type="ChEBI" id="CHEBI:15378"/>
        <dbReference type="ChEBI" id="CHEBI:24646"/>
        <dbReference type="ChEBI" id="CHEBI:57540"/>
        <dbReference type="ChEBI" id="CHEBI:57945"/>
        <dbReference type="ChEBI" id="CHEBI:132124"/>
    </reaction>
</comment>
<comment type="subunit">
    <text evidence="1">NDH-1 is composed of 14 different subunits. Subunits NuoB, C, D, E, F, and G constitute the peripheral sector of the complex.</text>
</comment>
<comment type="subcellular location">
    <subcellularLocation>
        <location evidence="1">Cell membrane</location>
        <topology evidence="1">Peripheral membrane protein</topology>
        <orientation evidence="1">Cytoplasmic side</orientation>
    </subcellularLocation>
</comment>
<comment type="similarity">
    <text evidence="1">Belongs to the complex I 49 kDa subunit family.</text>
</comment>
<comment type="sequence caution" evidence="2">
    <conflict type="erroneous initiation">
        <sequence resource="EMBL-CDS" id="AAK47575"/>
    </conflict>
</comment>
<name>NUOD_MYCTO</name>
<proteinExistence type="inferred from homology"/>
<organism>
    <name type="scientific">Mycobacterium tuberculosis (strain CDC 1551 / Oshkosh)</name>
    <dbReference type="NCBI Taxonomy" id="83331"/>
    <lineage>
        <taxon>Bacteria</taxon>
        <taxon>Bacillati</taxon>
        <taxon>Actinomycetota</taxon>
        <taxon>Actinomycetes</taxon>
        <taxon>Mycobacteriales</taxon>
        <taxon>Mycobacteriaceae</taxon>
        <taxon>Mycobacterium</taxon>
        <taxon>Mycobacterium tuberculosis complex</taxon>
    </lineage>
</organism>
<gene>
    <name evidence="1" type="primary">nuoD</name>
    <name type="ordered locus">MT3236</name>
</gene>
<protein>
    <recommendedName>
        <fullName evidence="1">NADH-quinone oxidoreductase subunit D</fullName>
        <ecNumber evidence="1">7.1.1.-</ecNumber>
    </recommendedName>
    <alternativeName>
        <fullName evidence="1">NADH dehydrogenase I subunit D</fullName>
    </alternativeName>
    <alternativeName>
        <fullName evidence="1">NDH-1 subunit D</fullName>
    </alternativeName>
</protein>
<evidence type="ECO:0000255" key="1">
    <source>
        <dbReference type="HAMAP-Rule" id="MF_01358"/>
    </source>
</evidence>
<evidence type="ECO:0000305" key="2"/>
<accession>P9WJH4</accession>
<accession>L0TEP2</accession>
<accession>P65569</accession>
<accession>P95178</accession>
<dbReference type="EC" id="7.1.1.-" evidence="1"/>
<dbReference type="EMBL" id="AE000516">
    <property type="protein sequence ID" value="AAK47575.1"/>
    <property type="status" value="ALT_INIT"/>
    <property type="molecule type" value="Genomic_DNA"/>
</dbReference>
<dbReference type="PIR" id="E70647">
    <property type="entry name" value="E70647"/>
</dbReference>
<dbReference type="RefSeq" id="WP_003416430.1">
    <property type="nucleotide sequence ID" value="NZ_KK341227.1"/>
</dbReference>
<dbReference type="SMR" id="P9WJH4"/>
<dbReference type="GeneID" id="45427135"/>
<dbReference type="KEGG" id="mtc:MT3236"/>
<dbReference type="PATRIC" id="fig|83331.31.peg.3484"/>
<dbReference type="HOGENOM" id="CLU_015134_1_2_11"/>
<dbReference type="Proteomes" id="UP000001020">
    <property type="component" value="Chromosome"/>
</dbReference>
<dbReference type="GO" id="GO:0005886">
    <property type="term" value="C:plasma membrane"/>
    <property type="evidence" value="ECO:0007669"/>
    <property type="project" value="UniProtKB-SubCell"/>
</dbReference>
<dbReference type="GO" id="GO:0051287">
    <property type="term" value="F:NAD binding"/>
    <property type="evidence" value="ECO:0007669"/>
    <property type="project" value="InterPro"/>
</dbReference>
<dbReference type="GO" id="GO:0050136">
    <property type="term" value="F:NADH:ubiquinone reductase (non-electrogenic) activity"/>
    <property type="evidence" value="ECO:0007669"/>
    <property type="project" value="UniProtKB-UniRule"/>
</dbReference>
<dbReference type="GO" id="GO:0048038">
    <property type="term" value="F:quinone binding"/>
    <property type="evidence" value="ECO:0007669"/>
    <property type="project" value="UniProtKB-KW"/>
</dbReference>
<dbReference type="FunFam" id="1.10.645.10:FF:000005">
    <property type="entry name" value="NADH-quinone oxidoreductase subunit D"/>
    <property type="match status" value="1"/>
</dbReference>
<dbReference type="Gene3D" id="1.10.645.10">
    <property type="entry name" value="Cytochrome-c3 Hydrogenase, chain B"/>
    <property type="match status" value="1"/>
</dbReference>
<dbReference type="HAMAP" id="MF_01358">
    <property type="entry name" value="NDH1_NuoD"/>
    <property type="match status" value="1"/>
</dbReference>
<dbReference type="InterPro" id="IPR001135">
    <property type="entry name" value="NADH_Q_OxRdtase_suD"/>
</dbReference>
<dbReference type="InterPro" id="IPR014029">
    <property type="entry name" value="NADH_UbQ_OxRdtase_49kDa_CS"/>
</dbReference>
<dbReference type="InterPro" id="IPR022885">
    <property type="entry name" value="NDH1_su_D/H"/>
</dbReference>
<dbReference type="InterPro" id="IPR029014">
    <property type="entry name" value="NiFe-Hase_large"/>
</dbReference>
<dbReference type="NCBIfam" id="TIGR01962">
    <property type="entry name" value="NuoD"/>
    <property type="match status" value="1"/>
</dbReference>
<dbReference type="NCBIfam" id="NF004739">
    <property type="entry name" value="PRK06075.1"/>
    <property type="match status" value="1"/>
</dbReference>
<dbReference type="PANTHER" id="PTHR11993:SF10">
    <property type="entry name" value="NADH DEHYDROGENASE [UBIQUINONE] IRON-SULFUR PROTEIN 2, MITOCHONDRIAL"/>
    <property type="match status" value="1"/>
</dbReference>
<dbReference type="PANTHER" id="PTHR11993">
    <property type="entry name" value="NADH-UBIQUINONE OXIDOREDUCTASE 49 KDA SUBUNIT"/>
    <property type="match status" value="1"/>
</dbReference>
<dbReference type="Pfam" id="PF00346">
    <property type="entry name" value="Complex1_49kDa"/>
    <property type="match status" value="1"/>
</dbReference>
<dbReference type="SUPFAM" id="SSF56762">
    <property type="entry name" value="HydB/Nqo4-like"/>
    <property type="match status" value="1"/>
</dbReference>
<dbReference type="PROSITE" id="PS00535">
    <property type="entry name" value="COMPLEX1_49K"/>
    <property type="match status" value="1"/>
</dbReference>
<reference key="1">
    <citation type="journal article" date="2002" name="J. Bacteriol.">
        <title>Whole-genome comparison of Mycobacterium tuberculosis clinical and laboratory strains.</title>
        <authorList>
            <person name="Fleischmann R.D."/>
            <person name="Alland D."/>
            <person name="Eisen J.A."/>
            <person name="Carpenter L."/>
            <person name="White O."/>
            <person name="Peterson J.D."/>
            <person name="DeBoy R.T."/>
            <person name="Dodson R.J."/>
            <person name="Gwinn M.L."/>
            <person name="Haft D.H."/>
            <person name="Hickey E.K."/>
            <person name="Kolonay J.F."/>
            <person name="Nelson W.C."/>
            <person name="Umayam L.A."/>
            <person name="Ermolaeva M.D."/>
            <person name="Salzberg S.L."/>
            <person name="Delcher A."/>
            <person name="Utterback T.R."/>
            <person name="Weidman J.F."/>
            <person name="Khouri H.M."/>
            <person name="Gill J."/>
            <person name="Mikula A."/>
            <person name="Bishai W."/>
            <person name="Jacobs W.R. Jr."/>
            <person name="Venter J.C."/>
            <person name="Fraser C.M."/>
        </authorList>
    </citation>
    <scope>NUCLEOTIDE SEQUENCE [LARGE SCALE GENOMIC DNA]</scope>
    <source>
        <strain>CDC 1551 / Oshkosh</strain>
    </source>
</reference>
<keyword id="KW-1003">Cell membrane</keyword>
<keyword id="KW-0472">Membrane</keyword>
<keyword id="KW-0520">NAD</keyword>
<keyword id="KW-0874">Quinone</keyword>
<keyword id="KW-1185">Reference proteome</keyword>
<keyword id="KW-1278">Translocase</keyword>
<keyword id="KW-0813">Transport</keyword>
<sequence>MTAIADSAGGAGETVLVAGGQDWQQVVDAARSADPGERIVVNMGPQHPSTHGVLRLILEIEGETVVEARCGIGYLHTGIEKNLEYRYWTQGVTFVTRMDYLSPFFNETAYCLGVEKLLGITDEIPERVNVIRVLMMELNRISSHLVALATGGMELGAMTPMFVGFRAREIVLTLFEKITGLRMNSAYIRPGGVAQDLPPNAATEIAEALKQLRQPLREMGELLNENAIWKARTQGVGYLDLTGCMALGITGPILRSTGLPHDLRKSEPYCGYQHYEFDVITDDSCDAYGRYMIRVKEMWESMKIVEQCLDKLRPGPTMISDRKLAWPADLQVGPDGLGNSPKHIAKIMGSSMEALIHHFKLVTEGIRVPAGQVYVAVESPRGELGVHMVSDGGTRPYRVHYRDPSFTNLQSVAAMCEGGMVADLIAAVASIDPVMGGVDR</sequence>
<feature type="chain" id="PRO_0000427829" description="NADH-quinone oxidoreductase subunit D">
    <location>
        <begin position="1"/>
        <end position="440"/>
    </location>
</feature>